<feature type="chain" id="PRO_1000004551" description="Translation initiation factor IF-3">
    <location>
        <begin position="1"/>
        <end position="206"/>
    </location>
</feature>
<dbReference type="EMBL" id="CP000096">
    <property type="protein sequence ID" value="ABB23012.1"/>
    <property type="molecule type" value="Genomic_DNA"/>
</dbReference>
<dbReference type="RefSeq" id="WP_011356888.1">
    <property type="nucleotide sequence ID" value="NC_007512.1"/>
</dbReference>
<dbReference type="SMR" id="Q3B6L9"/>
<dbReference type="STRING" id="319225.Plut_0122"/>
<dbReference type="KEGG" id="plt:Plut_0122"/>
<dbReference type="eggNOG" id="COG0290">
    <property type="taxonomic scope" value="Bacteria"/>
</dbReference>
<dbReference type="HOGENOM" id="CLU_054919_3_0_10"/>
<dbReference type="OrthoDB" id="9806014at2"/>
<dbReference type="Proteomes" id="UP000002709">
    <property type="component" value="Chromosome"/>
</dbReference>
<dbReference type="GO" id="GO:0005737">
    <property type="term" value="C:cytoplasm"/>
    <property type="evidence" value="ECO:0007669"/>
    <property type="project" value="UniProtKB-SubCell"/>
</dbReference>
<dbReference type="GO" id="GO:0043022">
    <property type="term" value="F:ribosome binding"/>
    <property type="evidence" value="ECO:0007669"/>
    <property type="project" value="TreeGrafter"/>
</dbReference>
<dbReference type="GO" id="GO:0003743">
    <property type="term" value="F:translation initiation factor activity"/>
    <property type="evidence" value="ECO:0007669"/>
    <property type="project" value="UniProtKB-UniRule"/>
</dbReference>
<dbReference type="GO" id="GO:0032790">
    <property type="term" value="P:ribosome disassembly"/>
    <property type="evidence" value="ECO:0007669"/>
    <property type="project" value="TreeGrafter"/>
</dbReference>
<dbReference type="Gene3D" id="3.30.110.10">
    <property type="entry name" value="Translation initiation factor 3 (IF-3), C-terminal domain"/>
    <property type="match status" value="1"/>
</dbReference>
<dbReference type="Gene3D" id="3.10.20.80">
    <property type="entry name" value="Translation initiation factor 3 (IF-3), N-terminal domain"/>
    <property type="match status" value="1"/>
</dbReference>
<dbReference type="HAMAP" id="MF_00080">
    <property type="entry name" value="IF_3"/>
    <property type="match status" value="1"/>
</dbReference>
<dbReference type="InterPro" id="IPR036788">
    <property type="entry name" value="T_IF-3_C_sf"/>
</dbReference>
<dbReference type="InterPro" id="IPR036787">
    <property type="entry name" value="T_IF-3_N_sf"/>
</dbReference>
<dbReference type="InterPro" id="IPR001288">
    <property type="entry name" value="Translation_initiation_fac_3"/>
</dbReference>
<dbReference type="InterPro" id="IPR019815">
    <property type="entry name" value="Translation_initiation_fac_3_C"/>
</dbReference>
<dbReference type="InterPro" id="IPR019814">
    <property type="entry name" value="Translation_initiation_fac_3_N"/>
</dbReference>
<dbReference type="NCBIfam" id="TIGR00168">
    <property type="entry name" value="infC"/>
    <property type="match status" value="1"/>
</dbReference>
<dbReference type="PANTHER" id="PTHR10938">
    <property type="entry name" value="TRANSLATION INITIATION FACTOR IF-3"/>
    <property type="match status" value="1"/>
</dbReference>
<dbReference type="PANTHER" id="PTHR10938:SF0">
    <property type="entry name" value="TRANSLATION INITIATION FACTOR IF-3, MITOCHONDRIAL"/>
    <property type="match status" value="1"/>
</dbReference>
<dbReference type="Pfam" id="PF00707">
    <property type="entry name" value="IF3_C"/>
    <property type="match status" value="1"/>
</dbReference>
<dbReference type="Pfam" id="PF05198">
    <property type="entry name" value="IF3_N"/>
    <property type="match status" value="1"/>
</dbReference>
<dbReference type="SUPFAM" id="SSF55200">
    <property type="entry name" value="Translation initiation factor IF3, C-terminal domain"/>
    <property type="match status" value="1"/>
</dbReference>
<dbReference type="SUPFAM" id="SSF54364">
    <property type="entry name" value="Translation initiation factor IF3, N-terminal domain"/>
    <property type="match status" value="1"/>
</dbReference>
<sequence length="206" mass="23995">MKKQKATSQKPKITYRVNEQIRVPEVRIIFPDGTQQVMKTIDARRMAEDRNTDLIEVQPNAEPPVCKFDNLGKLLYKMAQRDKDLKKKQKTTTLKELRFHPNTDKHDFDFKTAHLEEFLRKGNRVRATIVFLGRSIIYKDKGLELADRLTERLSVVGNREGEPKFEGKKLFVYFEPDKKKIDAYERIRSKTGTPLAPLEESADAED</sequence>
<organism>
    <name type="scientific">Chlorobium luteolum (strain DSM 273 / BCRC 81028 / 2530)</name>
    <name type="common">Pelodictyon luteolum</name>
    <dbReference type="NCBI Taxonomy" id="319225"/>
    <lineage>
        <taxon>Bacteria</taxon>
        <taxon>Pseudomonadati</taxon>
        <taxon>Chlorobiota</taxon>
        <taxon>Chlorobiia</taxon>
        <taxon>Chlorobiales</taxon>
        <taxon>Chlorobiaceae</taxon>
        <taxon>Chlorobium/Pelodictyon group</taxon>
        <taxon>Pelodictyon</taxon>
    </lineage>
</organism>
<gene>
    <name evidence="1" type="primary">infC</name>
    <name type="ordered locus">Plut_0122</name>
</gene>
<protein>
    <recommendedName>
        <fullName evidence="1">Translation initiation factor IF-3</fullName>
    </recommendedName>
</protein>
<accession>Q3B6L9</accession>
<evidence type="ECO:0000255" key="1">
    <source>
        <dbReference type="HAMAP-Rule" id="MF_00080"/>
    </source>
</evidence>
<proteinExistence type="inferred from homology"/>
<keyword id="KW-0963">Cytoplasm</keyword>
<keyword id="KW-0396">Initiation factor</keyword>
<keyword id="KW-0648">Protein biosynthesis</keyword>
<keyword id="KW-1185">Reference proteome</keyword>
<comment type="function">
    <text evidence="1">IF-3 binds to the 30S ribosomal subunit and shifts the equilibrium between 70S ribosomes and their 50S and 30S subunits in favor of the free subunits, thus enhancing the availability of 30S subunits on which protein synthesis initiation begins.</text>
</comment>
<comment type="subunit">
    <text evidence="1">Monomer.</text>
</comment>
<comment type="subcellular location">
    <subcellularLocation>
        <location evidence="1">Cytoplasm</location>
    </subcellularLocation>
</comment>
<comment type="similarity">
    <text evidence="1">Belongs to the IF-3 family.</text>
</comment>
<reference key="1">
    <citation type="submission" date="2005-08" db="EMBL/GenBank/DDBJ databases">
        <title>Complete sequence of Pelodictyon luteolum DSM 273.</title>
        <authorList>
            <consortium name="US DOE Joint Genome Institute"/>
            <person name="Copeland A."/>
            <person name="Lucas S."/>
            <person name="Lapidus A."/>
            <person name="Barry K."/>
            <person name="Detter J.C."/>
            <person name="Glavina T."/>
            <person name="Hammon N."/>
            <person name="Israni S."/>
            <person name="Pitluck S."/>
            <person name="Bryant D."/>
            <person name="Schmutz J."/>
            <person name="Larimer F."/>
            <person name="Land M."/>
            <person name="Kyrpides N."/>
            <person name="Ivanova N."/>
            <person name="Richardson P."/>
        </authorList>
    </citation>
    <scope>NUCLEOTIDE SEQUENCE [LARGE SCALE GENOMIC DNA]</scope>
    <source>
        <strain>DSM 273 / BCRC 81028 / 2530</strain>
    </source>
</reference>
<name>IF3_CHLL3</name>